<keyword id="KW-0963">Cytoplasm</keyword>
<keyword id="KW-0444">Lipid biosynthesis</keyword>
<keyword id="KW-0443">Lipid metabolism</keyword>
<keyword id="KW-0520">NAD</keyword>
<keyword id="KW-0521">NADP</keyword>
<keyword id="KW-0547">Nucleotide-binding</keyword>
<keyword id="KW-0560">Oxidoreductase</keyword>
<keyword id="KW-0594">Phospholipid biosynthesis</keyword>
<keyword id="KW-1208">Phospholipid metabolism</keyword>
<comment type="function">
    <text evidence="1">Catalyzes the reduction of the glycolytic intermediate dihydroxyacetone phosphate (DHAP) to sn-glycerol 3-phosphate (G3P), the key precursor for phospholipid synthesis.</text>
</comment>
<comment type="catalytic activity">
    <reaction evidence="1">
        <text>sn-glycerol 3-phosphate + NAD(+) = dihydroxyacetone phosphate + NADH + H(+)</text>
        <dbReference type="Rhea" id="RHEA:11092"/>
        <dbReference type="ChEBI" id="CHEBI:15378"/>
        <dbReference type="ChEBI" id="CHEBI:57540"/>
        <dbReference type="ChEBI" id="CHEBI:57597"/>
        <dbReference type="ChEBI" id="CHEBI:57642"/>
        <dbReference type="ChEBI" id="CHEBI:57945"/>
        <dbReference type="EC" id="1.1.1.94"/>
    </reaction>
    <physiologicalReaction direction="right-to-left" evidence="1">
        <dbReference type="Rhea" id="RHEA:11094"/>
    </physiologicalReaction>
</comment>
<comment type="catalytic activity">
    <reaction evidence="1">
        <text>sn-glycerol 3-phosphate + NADP(+) = dihydroxyacetone phosphate + NADPH + H(+)</text>
        <dbReference type="Rhea" id="RHEA:11096"/>
        <dbReference type="ChEBI" id="CHEBI:15378"/>
        <dbReference type="ChEBI" id="CHEBI:57597"/>
        <dbReference type="ChEBI" id="CHEBI:57642"/>
        <dbReference type="ChEBI" id="CHEBI:57783"/>
        <dbReference type="ChEBI" id="CHEBI:58349"/>
        <dbReference type="EC" id="1.1.1.94"/>
    </reaction>
    <physiologicalReaction direction="right-to-left" evidence="1">
        <dbReference type="Rhea" id="RHEA:11098"/>
    </physiologicalReaction>
</comment>
<comment type="pathway">
    <text evidence="1">Membrane lipid metabolism; glycerophospholipid metabolism.</text>
</comment>
<comment type="subcellular location">
    <subcellularLocation>
        <location evidence="1">Cytoplasm</location>
    </subcellularLocation>
</comment>
<comment type="similarity">
    <text evidence="1">Belongs to the NAD-dependent glycerol-3-phosphate dehydrogenase family.</text>
</comment>
<dbReference type="EC" id="1.1.1.94" evidence="1"/>
<dbReference type="EMBL" id="CP000308">
    <property type="protein sequence ID" value="ABG15436.1"/>
    <property type="molecule type" value="Genomic_DNA"/>
</dbReference>
<dbReference type="RefSeq" id="WP_002208975.1">
    <property type="nucleotide sequence ID" value="NZ_CP009906.1"/>
</dbReference>
<dbReference type="SMR" id="Q1C286"/>
<dbReference type="GeneID" id="57974523"/>
<dbReference type="KEGG" id="ypa:YPA_3474"/>
<dbReference type="UniPathway" id="UPA00940"/>
<dbReference type="Proteomes" id="UP000001971">
    <property type="component" value="Chromosome"/>
</dbReference>
<dbReference type="GO" id="GO:0005829">
    <property type="term" value="C:cytosol"/>
    <property type="evidence" value="ECO:0007669"/>
    <property type="project" value="TreeGrafter"/>
</dbReference>
<dbReference type="GO" id="GO:0047952">
    <property type="term" value="F:glycerol-3-phosphate dehydrogenase [NAD(P)+] activity"/>
    <property type="evidence" value="ECO:0007669"/>
    <property type="project" value="UniProtKB-UniRule"/>
</dbReference>
<dbReference type="GO" id="GO:0051287">
    <property type="term" value="F:NAD binding"/>
    <property type="evidence" value="ECO:0007669"/>
    <property type="project" value="InterPro"/>
</dbReference>
<dbReference type="GO" id="GO:0005975">
    <property type="term" value="P:carbohydrate metabolic process"/>
    <property type="evidence" value="ECO:0007669"/>
    <property type="project" value="InterPro"/>
</dbReference>
<dbReference type="GO" id="GO:0046167">
    <property type="term" value="P:glycerol-3-phosphate biosynthetic process"/>
    <property type="evidence" value="ECO:0007669"/>
    <property type="project" value="UniProtKB-UniRule"/>
</dbReference>
<dbReference type="GO" id="GO:0046168">
    <property type="term" value="P:glycerol-3-phosphate catabolic process"/>
    <property type="evidence" value="ECO:0007669"/>
    <property type="project" value="InterPro"/>
</dbReference>
<dbReference type="GO" id="GO:0046474">
    <property type="term" value="P:glycerophospholipid biosynthetic process"/>
    <property type="evidence" value="ECO:0007669"/>
    <property type="project" value="TreeGrafter"/>
</dbReference>
<dbReference type="FunFam" id="1.10.1040.10:FF:000001">
    <property type="entry name" value="Glycerol-3-phosphate dehydrogenase [NAD(P)+]"/>
    <property type="match status" value="1"/>
</dbReference>
<dbReference type="FunFam" id="3.40.50.720:FF:000019">
    <property type="entry name" value="Glycerol-3-phosphate dehydrogenase [NAD(P)+]"/>
    <property type="match status" value="1"/>
</dbReference>
<dbReference type="Gene3D" id="1.10.1040.10">
    <property type="entry name" value="N-(1-d-carboxylethyl)-l-norvaline Dehydrogenase, domain 2"/>
    <property type="match status" value="1"/>
</dbReference>
<dbReference type="Gene3D" id="3.40.50.720">
    <property type="entry name" value="NAD(P)-binding Rossmann-like Domain"/>
    <property type="match status" value="1"/>
</dbReference>
<dbReference type="HAMAP" id="MF_00394">
    <property type="entry name" value="NAD_Glyc3P_dehydrog"/>
    <property type="match status" value="1"/>
</dbReference>
<dbReference type="InterPro" id="IPR008927">
    <property type="entry name" value="6-PGluconate_DH-like_C_sf"/>
</dbReference>
<dbReference type="InterPro" id="IPR013328">
    <property type="entry name" value="6PGD_dom2"/>
</dbReference>
<dbReference type="InterPro" id="IPR006168">
    <property type="entry name" value="G3P_DH_NAD-dep"/>
</dbReference>
<dbReference type="InterPro" id="IPR006109">
    <property type="entry name" value="G3P_DH_NAD-dep_C"/>
</dbReference>
<dbReference type="InterPro" id="IPR011128">
    <property type="entry name" value="G3P_DH_NAD-dep_N"/>
</dbReference>
<dbReference type="InterPro" id="IPR036291">
    <property type="entry name" value="NAD(P)-bd_dom_sf"/>
</dbReference>
<dbReference type="NCBIfam" id="NF000939">
    <property type="entry name" value="PRK00094.1-1"/>
    <property type="match status" value="1"/>
</dbReference>
<dbReference type="NCBIfam" id="NF000940">
    <property type="entry name" value="PRK00094.1-2"/>
    <property type="match status" value="1"/>
</dbReference>
<dbReference type="NCBIfam" id="NF000942">
    <property type="entry name" value="PRK00094.1-4"/>
    <property type="match status" value="1"/>
</dbReference>
<dbReference type="PANTHER" id="PTHR11728">
    <property type="entry name" value="GLYCEROL-3-PHOSPHATE DEHYDROGENASE"/>
    <property type="match status" value="1"/>
</dbReference>
<dbReference type="PANTHER" id="PTHR11728:SF1">
    <property type="entry name" value="GLYCEROL-3-PHOSPHATE DEHYDROGENASE [NAD(+)] 2, CHLOROPLASTIC"/>
    <property type="match status" value="1"/>
</dbReference>
<dbReference type="Pfam" id="PF07479">
    <property type="entry name" value="NAD_Gly3P_dh_C"/>
    <property type="match status" value="1"/>
</dbReference>
<dbReference type="Pfam" id="PF01210">
    <property type="entry name" value="NAD_Gly3P_dh_N"/>
    <property type="match status" value="1"/>
</dbReference>
<dbReference type="PIRSF" id="PIRSF000114">
    <property type="entry name" value="Glycerol-3-P_dh"/>
    <property type="match status" value="1"/>
</dbReference>
<dbReference type="PRINTS" id="PR00077">
    <property type="entry name" value="GPDHDRGNASE"/>
</dbReference>
<dbReference type="SUPFAM" id="SSF48179">
    <property type="entry name" value="6-phosphogluconate dehydrogenase C-terminal domain-like"/>
    <property type="match status" value="1"/>
</dbReference>
<dbReference type="SUPFAM" id="SSF51735">
    <property type="entry name" value="NAD(P)-binding Rossmann-fold domains"/>
    <property type="match status" value="1"/>
</dbReference>
<dbReference type="PROSITE" id="PS00957">
    <property type="entry name" value="NAD_G3PDH"/>
    <property type="match status" value="1"/>
</dbReference>
<protein>
    <recommendedName>
        <fullName evidence="1">Glycerol-3-phosphate dehydrogenase [NAD(P)+]</fullName>
        <ecNumber evidence="1">1.1.1.94</ecNumber>
    </recommendedName>
    <alternativeName>
        <fullName evidence="1">NAD(P)(+)-dependent glycerol-3-phosphate dehydrogenase</fullName>
    </alternativeName>
    <alternativeName>
        <fullName evidence="1">NAD(P)H-dependent dihydroxyacetone-phosphate reductase</fullName>
    </alternativeName>
</protein>
<accession>Q1C286</accession>
<feature type="chain" id="PRO_1000049570" description="Glycerol-3-phosphate dehydrogenase [NAD(P)+]">
    <location>
        <begin position="1"/>
        <end position="339"/>
    </location>
</feature>
<feature type="active site" description="Proton acceptor" evidence="1">
    <location>
        <position position="195"/>
    </location>
</feature>
<feature type="binding site" evidence="1">
    <location>
        <position position="15"/>
    </location>
    <ligand>
        <name>NADPH</name>
        <dbReference type="ChEBI" id="CHEBI:57783"/>
    </ligand>
</feature>
<feature type="binding site" evidence="1">
    <location>
        <position position="16"/>
    </location>
    <ligand>
        <name>NADPH</name>
        <dbReference type="ChEBI" id="CHEBI:57783"/>
    </ligand>
</feature>
<feature type="binding site" evidence="1">
    <location>
        <position position="36"/>
    </location>
    <ligand>
        <name>NADPH</name>
        <dbReference type="ChEBI" id="CHEBI:57783"/>
    </ligand>
</feature>
<feature type="binding site" evidence="1">
    <location>
        <position position="110"/>
    </location>
    <ligand>
        <name>NADPH</name>
        <dbReference type="ChEBI" id="CHEBI:57783"/>
    </ligand>
</feature>
<feature type="binding site" evidence="1">
    <location>
        <position position="110"/>
    </location>
    <ligand>
        <name>sn-glycerol 3-phosphate</name>
        <dbReference type="ChEBI" id="CHEBI:57597"/>
    </ligand>
</feature>
<feature type="binding site" evidence="1">
    <location>
        <position position="139"/>
    </location>
    <ligand>
        <name>sn-glycerol 3-phosphate</name>
        <dbReference type="ChEBI" id="CHEBI:57597"/>
    </ligand>
</feature>
<feature type="binding site" evidence="1">
    <location>
        <position position="141"/>
    </location>
    <ligand>
        <name>sn-glycerol 3-phosphate</name>
        <dbReference type="ChEBI" id="CHEBI:57597"/>
    </ligand>
</feature>
<feature type="binding site" evidence="1">
    <location>
        <position position="143"/>
    </location>
    <ligand>
        <name>NADPH</name>
        <dbReference type="ChEBI" id="CHEBI:57783"/>
    </ligand>
</feature>
<feature type="binding site" evidence="1">
    <location>
        <position position="195"/>
    </location>
    <ligand>
        <name>sn-glycerol 3-phosphate</name>
        <dbReference type="ChEBI" id="CHEBI:57597"/>
    </ligand>
</feature>
<feature type="binding site" evidence="1">
    <location>
        <position position="248"/>
    </location>
    <ligand>
        <name>sn-glycerol 3-phosphate</name>
        <dbReference type="ChEBI" id="CHEBI:57597"/>
    </ligand>
</feature>
<feature type="binding site" evidence="1">
    <location>
        <position position="258"/>
    </location>
    <ligand>
        <name>sn-glycerol 3-phosphate</name>
        <dbReference type="ChEBI" id="CHEBI:57597"/>
    </ligand>
</feature>
<feature type="binding site" evidence="1">
    <location>
        <position position="259"/>
    </location>
    <ligand>
        <name>NADPH</name>
        <dbReference type="ChEBI" id="CHEBI:57783"/>
    </ligand>
</feature>
<feature type="binding site" evidence="1">
    <location>
        <position position="259"/>
    </location>
    <ligand>
        <name>sn-glycerol 3-phosphate</name>
        <dbReference type="ChEBI" id="CHEBI:57597"/>
    </ligand>
</feature>
<feature type="binding site" evidence="1">
    <location>
        <position position="260"/>
    </location>
    <ligand>
        <name>sn-glycerol 3-phosphate</name>
        <dbReference type="ChEBI" id="CHEBI:57597"/>
    </ligand>
</feature>
<feature type="binding site" evidence="1">
    <location>
        <position position="283"/>
    </location>
    <ligand>
        <name>NADPH</name>
        <dbReference type="ChEBI" id="CHEBI:57783"/>
    </ligand>
</feature>
<feature type="binding site" evidence="1">
    <location>
        <position position="285"/>
    </location>
    <ligand>
        <name>NADPH</name>
        <dbReference type="ChEBI" id="CHEBI:57783"/>
    </ligand>
</feature>
<name>GPDA_YERPA</name>
<evidence type="ECO:0000255" key="1">
    <source>
        <dbReference type="HAMAP-Rule" id="MF_00394"/>
    </source>
</evidence>
<gene>
    <name evidence="1" type="primary">gpsA</name>
    <name type="ordered locus">YPA_3474</name>
</gene>
<sequence>MNTNPASMAVIGAGSYGTALAITLARNGHQVVLWGHDPKHIQQLQQDRCNRAFLPDAAFPDTLRLETDLACALAASRDVLVVVPSHVFGAVLHQLKPHLRKDARIVWATKGLEAETGRLLQDVAREVLGEAIPLAVISGPTFAKELAAGLPTAIALASTDVQFSEDLQQLLHCGKSFRVYSNPDFIGVQLGGAVKNVIAIGAGMSDGIGFGANARTALITRGLAEMTRLGTALGADPSTFMGMAGLGDLVLTCTDNQSRNRRFGIMLGQGLGVKEAQDNIGQVVEGYRNTKEVLALAQRHGVEMPITEQIYQVLYCHKNAREAALTLLGRTKKDEKIGI</sequence>
<proteinExistence type="inferred from homology"/>
<reference key="1">
    <citation type="journal article" date="2006" name="J. Bacteriol.">
        <title>Complete genome sequence of Yersinia pestis strains Antiqua and Nepal516: evidence of gene reduction in an emerging pathogen.</title>
        <authorList>
            <person name="Chain P.S.G."/>
            <person name="Hu P."/>
            <person name="Malfatti S.A."/>
            <person name="Radnedge L."/>
            <person name="Larimer F."/>
            <person name="Vergez L.M."/>
            <person name="Worsham P."/>
            <person name="Chu M.C."/>
            <person name="Andersen G.L."/>
        </authorList>
    </citation>
    <scope>NUCLEOTIDE SEQUENCE [LARGE SCALE GENOMIC DNA]</scope>
    <source>
        <strain>Antiqua</strain>
    </source>
</reference>
<organism>
    <name type="scientific">Yersinia pestis bv. Antiqua (strain Antiqua)</name>
    <dbReference type="NCBI Taxonomy" id="360102"/>
    <lineage>
        <taxon>Bacteria</taxon>
        <taxon>Pseudomonadati</taxon>
        <taxon>Pseudomonadota</taxon>
        <taxon>Gammaproteobacteria</taxon>
        <taxon>Enterobacterales</taxon>
        <taxon>Yersiniaceae</taxon>
        <taxon>Yersinia</taxon>
    </lineage>
</organism>